<protein>
    <recommendedName>
        <fullName evidence="1">Ribosomal RNA large subunit methyltransferase H</fullName>
        <ecNumber evidence="1">2.1.1.177</ecNumber>
    </recommendedName>
    <alternativeName>
        <fullName evidence="1">23S rRNA (pseudouridine1915-N3)-methyltransferase</fullName>
    </alternativeName>
    <alternativeName>
        <fullName evidence="1">23S rRNA m3Psi1915 methyltransferase</fullName>
    </alternativeName>
    <alternativeName>
        <fullName evidence="1">rRNA (pseudouridine-N3-)-methyltransferase RlmH</fullName>
    </alternativeName>
</protein>
<feature type="chain" id="PRO_0000260589" description="Ribosomal RNA large subunit methyltransferase H">
    <location>
        <begin position="1"/>
        <end position="162"/>
    </location>
</feature>
<feature type="binding site" evidence="1">
    <location>
        <position position="78"/>
    </location>
    <ligand>
        <name>S-adenosyl-L-methionine</name>
        <dbReference type="ChEBI" id="CHEBI:59789"/>
    </ligand>
</feature>
<feature type="binding site" evidence="1">
    <location>
        <position position="109"/>
    </location>
    <ligand>
        <name>S-adenosyl-L-methionine</name>
        <dbReference type="ChEBI" id="CHEBI:59789"/>
    </ligand>
</feature>
<feature type="binding site" evidence="1">
    <location>
        <begin position="128"/>
        <end position="133"/>
    </location>
    <ligand>
        <name>S-adenosyl-L-methionine</name>
        <dbReference type="ChEBI" id="CHEBI:59789"/>
    </ligand>
</feature>
<proteinExistence type="inferred from homology"/>
<dbReference type="EC" id="2.1.1.177" evidence="1"/>
<dbReference type="EMBL" id="CP000082">
    <property type="protein sequence ID" value="AAZ18258.1"/>
    <property type="molecule type" value="Genomic_DNA"/>
</dbReference>
<dbReference type="RefSeq" id="WP_011279696.1">
    <property type="nucleotide sequence ID" value="NC_007204.1"/>
</dbReference>
<dbReference type="SMR" id="Q4FUQ0"/>
<dbReference type="STRING" id="259536.Psyc_0390"/>
<dbReference type="KEGG" id="par:Psyc_0390"/>
<dbReference type="eggNOG" id="COG1576">
    <property type="taxonomic scope" value="Bacteria"/>
</dbReference>
<dbReference type="HOGENOM" id="CLU_100552_1_0_6"/>
<dbReference type="OrthoDB" id="9806643at2"/>
<dbReference type="Proteomes" id="UP000000546">
    <property type="component" value="Chromosome"/>
</dbReference>
<dbReference type="GO" id="GO:0005737">
    <property type="term" value="C:cytoplasm"/>
    <property type="evidence" value="ECO:0007669"/>
    <property type="project" value="UniProtKB-SubCell"/>
</dbReference>
<dbReference type="GO" id="GO:0070038">
    <property type="term" value="F:rRNA (pseudouridine-N3-)-methyltransferase activity"/>
    <property type="evidence" value="ECO:0007669"/>
    <property type="project" value="UniProtKB-UniRule"/>
</dbReference>
<dbReference type="CDD" id="cd18081">
    <property type="entry name" value="RlmH-like"/>
    <property type="match status" value="1"/>
</dbReference>
<dbReference type="Gene3D" id="3.40.1280.10">
    <property type="match status" value="1"/>
</dbReference>
<dbReference type="HAMAP" id="MF_00658">
    <property type="entry name" value="23SrRNA_methyltr_H"/>
    <property type="match status" value="1"/>
</dbReference>
<dbReference type="InterPro" id="IPR029028">
    <property type="entry name" value="Alpha/beta_knot_MTases"/>
</dbReference>
<dbReference type="InterPro" id="IPR003742">
    <property type="entry name" value="RlmH-like"/>
</dbReference>
<dbReference type="InterPro" id="IPR029026">
    <property type="entry name" value="tRNA_m1G_MTases_N"/>
</dbReference>
<dbReference type="NCBIfam" id="NF000986">
    <property type="entry name" value="PRK00103.1-4"/>
    <property type="match status" value="1"/>
</dbReference>
<dbReference type="NCBIfam" id="TIGR00246">
    <property type="entry name" value="tRNA_RlmH_YbeA"/>
    <property type="match status" value="1"/>
</dbReference>
<dbReference type="PANTHER" id="PTHR33603">
    <property type="entry name" value="METHYLTRANSFERASE"/>
    <property type="match status" value="1"/>
</dbReference>
<dbReference type="PANTHER" id="PTHR33603:SF1">
    <property type="entry name" value="RIBOSOMAL RNA LARGE SUBUNIT METHYLTRANSFERASE H"/>
    <property type="match status" value="1"/>
</dbReference>
<dbReference type="Pfam" id="PF02590">
    <property type="entry name" value="SPOUT_MTase"/>
    <property type="match status" value="1"/>
</dbReference>
<dbReference type="PIRSF" id="PIRSF004505">
    <property type="entry name" value="MT_bac"/>
    <property type="match status" value="1"/>
</dbReference>
<dbReference type="SUPFAM" id="SSF75217">
    <property type="entry name" value="alpha/beta knot"/>
    <property type="match status" value="1"/>
</dbReference>
<organism>
    <name type="scientific">Psychrobacter arcticus (strain DSM 17307 / VKM B-2377 / 273-4)</name>
    <dbReference type="NCBI Taxonomy" id="259536"/>
    <lineage>
        <taxon>Bacteria</taxon>
        <taxon>Pseudomonadati</taxon>
        <taxon>Pseudomonadota</taxon>
        <taxon>Gammaproteobacteria</taxon>
        <taxon>Moraxellales</taxon>
        <taxon>Moraxellaceae</taxon>
        <taxon>Psychrobacter</taxon>
    </lineage>
</organism>
<sequence>MKVRILTVGNKMPKWVQTGFDEYHKRIQPMLNTEIVEIAAAKRAKNPSDANLAQYREQEGQAILAAHAAAGREQLWVLDVKGKMLSTENLADKLADGMQQGDDIALVIGGADGVSPEVLAKADVKWSLSALTLPHPLVRVVLMEQLYRAMSINHNHPYHRGN</sequence>
<reference key="1">
    <citation type="journal article" date="2010" name="Appl. Environ. Microbiol.">
        <title>The genome sequence of Psychrobacter arcticus 273-4, a psychroactive Siberian permafrost bacterium, reveals mechanisms for adaptation to low-temperature growth.</title>
        <authorList>
            <person name="Ayala-del-Rio H.L."/>
            <person name="Chain P.S."/>
            <person name="Grzymski J.J."/>
            <person name="Ponder M.A."/>
            <person name="Ivanova N."/>
            <person name="Bergholz P.W."/>
            <person name="Di Bartolo G."/>
            <person name="Hauser L."/>
            <person name="Land M."/>
            <person name="Bakermans C."/>
            <person name="Rodrigues D."/>
            <person name="Klappenbach J."/>
            <person name="Zarka D."/>
            <person name="Larimer F."/>
            <person name="Richardson P."/>
            <person name="Murray A."/>
            <person name="Thomashow M."/>
            <person name="Tiedje J.M."/>
        </authorList>
    </citation>
    <scope>NUCLEOTIDE SEQUENCE [LARGE SCALE GENOMIC DNA]</scope>
    <source>
        <strain>DSM 17307 / VKM B-2377 / 273-4</strain>
    </source>
</reference>
<keyword id="KW-0963">Cytoplasm</keyword>
<keyword id="KW-0489">Methyltransferase</keyword>
<keyword id="KW-1185">Reference proteome</keyword>
<keyword id="KW-0698">rRNA processing</keyword>
<keyword id="KW-0949">S-adenosyl-L-methionine</keyword>
<keyword id="KW-0808">Transferase</keyword>
<comment type="function">
    <text evidence="1">Specifically methylates the pseudouridine at position 1915 (m3Psi1915) in 23S rRNA.</text>
</comment>
<comment type="catalytic activity">
    <reaction evidence="1">
        <text>pseudouridine(1915) in 23S rRNA + S-adenosyl-L-methionine = N(3)-methylpseudouridine(1915) in 23S rRNA + S-adenosyl-L-homocysteine + H(+)</text>
        <dbReference type="Rhea" id="RHEA:42752"/>
        <dbReference type="Rhea" id="RHEA-COMP:10221"/>
        <dbReference type="Rhea" id="RHEA-COMP:10222"/>
        <dbReference type="ChEBI" id="CHEBI:15378"/>
        <dbReference type="ChEBI" id="CHEBI:57856"/>
        <dbReference type="ChEBI" id="CHEBI:59789"/>
        <dbReference type="ChEBI" id="CHEBI:65314"/>
        <dbReference type="ChEBI" id="CHEBI:74486"/>
        <dbReference type="EC" id="2.1.1.177"/>
    </reaction>
</comment>
<comment type="subunit">
    <text evidence="1">Homodimer.</text>
</comment>
<comment type="subcellular location">
    <subcellularLocation>
        <location evidence="1">Cytoplasm</location>
    </subcellularLocation>
</comment>
<comment type="similarity">
    <text evidence="1">Belongs to the RNA methyltransferase RlmH family.</text>
</comment>
<name>RLMH_PSYA2</name>
<evidence type="ECO:0000255" key="1">
    <source>
        <dbReference type="HAMAP-Rule" id="MF_00658"/>
    </source>
</evidence>
<gene>
    <name evidence="1" type="primary">rlmH</name>
    <name type="ordered locus">Psyc_0390</name>
</gene>
<accession>Q4FUQ0</accession>